<accession>Q02074</accession>
<feature type="initiator methionine" description="Removed" evidence="1">
    <location>
        <position position="1"/>
    </location>
</feature>
<feature type="chain" id="PRO_0000199249" description="Phycobilisome rod-core linker polypeptide cpcG">
    <location>
        <begin position="2"/>
        <end position="243"/>
    </location>
</feature>
<feature type="domain" description="PBS-linker" evidence="2">
    <location>
        <begin position="11"/>
        <end position="191"/>
    </location>
</feature>
<comment type="function">
    <text evidence="1">Rod-core linker protein required for attachment of phycocyanin to allophycocyanin in cores of phycobilisomes.</text>
</comment>
<comment type="function">
    <text evidence="1">Linker polypeptides determine the state of aggregation and the location of the disk-shaped phycobiliprotein units within the phycobilisome and modulate their spectroscopic properties in order to mediate a directed and optimal energy transfer.</text>
</comment>
<comment type="subunit">
    <text evidence="1">The phycobilisome is a hemidiscoidal structure that is composed of two distinct substructures: a core complex and a number of rods radiating from the core.</text>
</comment>
<comment type="subcellular location">
    <subcellularLocation>
        <location evidence="1">Plastid</location>
        <location evidence="1">Chloroplast thylakoid membrane</location>
        <topology evidence="1">Peripheral membrane protein</topology>
        <orientation evidence="1">Stromal side</orientation>
    </subcellularLocation>
</comment>
<comment type="miscellaneous">
    <text evidence="3">Although originally identified as Cyanidium caldarium, these sequences derive from Galdieria sulphuraria.</text>
</comment>
<comment type="similarity">
    <text evidence="2">Belongs to the phycobilisome linker protein family.</text>
</comment>
<sequence>MSIPLLYYPLSTQNQRVESFEILSNEEQSKIYTTDTLPSASEMDELIWAAYRQIFSEHQILKFTRQRFLESQLRFNQIKVREFIRGLAISDSFRKLNYDVNNNYRFVELCVQRILGRDVYNEKEKIAWSIVICNKGVIGFIDCLINSQEYLENFGDNIVPYQRRRIIFQRVNGETPFNLKTPRYGIEFRDKLVKPQFIWQGAIRRFRPQEQRPRAGDPVLFLNMVYDLNITPKFNRYPGLVNR</sequence>
<evidence type="ECO:0000250" key="1"/>
<evidence type="ECO:0000255" key="2">
    <source>
        <dbReference type="PROSITE-ProRule" id="PRU00775"/>
    </source>
</evidence>
<evidence type="ECO:0000305" key="3"/>
<organism>
    <name type="scientific">Galdieria sulphuraria</name>
    <name type="common">Red alga</name>
    <dbReference type="NCBI Taxonomy" id="130081"/>
    <lineage>
        <taxon>Eukaryota</taxon>
        <taxon>Rhodophyta</taxon>
        <taxon>Bangiophyceae</taxon>
        <taxon>Galdieriales</taxon>
        <taxon>Galdieriaceae</taxon>
        <taxon>Galdieria</taxon>
    </lineage>
</organism>
<name>PYG_GALSU</name>
<keyword id="KW-0042">Antenna complex</keyword>
<keyword id="KW-0150">Chloroplast</keyword>
<keyword id="KW-0472">Membrane</keyword>
<keyword id="KW-0602">Photosynthesis</keyword>
<keyword id="KW-0605">Phycobilisome</keyword>
<keyword id="KW-0934">Plastid</keyword>
<keyword id="KW-0793">Thylakoid</keyword>
<protein>
    <recommendedName>
        <fullName>Phycobilisome rod-core linker polypeptide cpcG</fullName>
    </recommendedName>
</protein>
<gene>
    <name type="primary">cpcG</name>
    <name type="synonym">cpcC</name>
</gene>
<geneLocation type="chloroplast"/>
<dbReference type="EMBL" id="X57251">
    <property type="protein sequence ID" value="CAA40533.1"/>
    <property type="molecule type" value="Genomic_DNA"/>
</dbReference>
<dbReference type="SMR" id="Q02074"/>
<dbReference type="GO" id="GO:0009535">
    <property type="term" value="C:chloroplast thylakoid membrane"/>
    <property type="evidence" value="ECO:0007669"/>
    <property type="project" value="UniProtKB-SubCell"/>
</dbReference>
<dbReference type="GO" id="GO:0030089">
    <property type="term" value="C:phycobilisome"/>
    <property type="evidence" value="ECO:0007669"/>
    <property type="project" value="UniProtKB-KW"/>
</dbReference>
<dbReference type="GO" id="GO:0015979">
    <property type="term" value="P:photosynthesis"/>
    <property type="evidence" value="ECO:0007669"/>
    <property type="project" value="UniProtKB-KW"/>
</dbReference>
<dbReference type="Gene3D" id="1.10.3130.20">
    <property type="entry name" value="Phycobilisome linker domain"/>
    <property type="match status" value="1"/>
</dbReference>
<dbReference type="InterPro" id="IPR001297">
    <property type="entry name" value="PBS_linker_dom"/>
</dbReference>
<dbReference type="InterPro" id="IPR038255">
    <property type="entry name" value="PBS_linker_sf"/>
</dbReference>
<dbReference type="PANTHER" id="PTHR34011">
    <property type="entry name" value="PHYCOBILISOME 32.1 KDA LINKER POLYPEPTIDE, PHYCOCYANIN-ASSOCIATED, ROD 2-RELATED"/>
    <property type="match status" value="1"/>
</dbReference>
<dbReference type="Pfam" id="PF00427">
    <property type="entry name" value="PBS_linker_poly"/>
    <property type="match status" value="1"/>
</dbReference>
<dbReference type="PROSITE" id="PS51445">
    <property type="entry name" value="PBS_LINKER"/>
    <property type="match status" value="1"/>
</dbReference>
<reference key="1">
    <citation type="journal article" date="1992" name="Plant Mol. Biol.">
        <title>Organization and expression of a phycobiliprotein gene cluster from the unicellular red alga Cyanidium caldarium.</title>
        <authorList>
            <person name="Valentin K.-U."/>
            <person name="Maid U."/>
            <person name="Emich A."/>
            <person name="Zetsche K."/>
        </authorList>
    </citation>
    <scope>NUCLEOTIDE SEQUENCE [GENOMIC DNA]</scope>
    <source>
        <strain>14-1-1 / Isolate 107.79/Goettingen</strain>
    </source>
</reference>
<proteinExistence type="inferred from homology"/>